<evidence type="ECO:0000250" key="1">
    <source>
        <dbReference type="UniProtKB" id="P13254"/>
    </source>
</evidence>
<evidence type="ECO:0000269" key="2">
    <source>
    </source>
</evidence>
<evidence type="ECO:0000303" key="3">
    <source>
    </source>
</evidence>
<evidence type="ECO:0000305" key="4"/>
<evidence type="ECO:0000312" key="5">
    <source>
        <dbReference type="EMBL" id="SEE88007.1"/>
    </source>
</evidence>
<organism>
    <name type="scientific">Pseudomonas deceptionensis</name>
    <dbReference type="NCBI Taxonomy" id="882211"/>
    <lineage>
        <taxon>Bacteria</taxon>
        <taxon>Pseudomonadati</taxon>
        <taxon>Pseudomonadota</taxon>
        <taxon>Gammaproteobacteria</taxon>
        <taxon>Pseudomonadales</taxon>
        <taxon>Pseudomonadaceae</taxon>
        <taxon>Pseudomonas</taxon>
    </lineage>
</organism>
<gene>
    <name evidence="3" type="primary">megL</name>
    <name evidence="5" type="ORF">SAMN04489800_2602</name>
</gene>
<reference key="1">
    <citation type="submission" date="2016-10" db="EMBL/GenBank/DDBJ databases">
        <authorList>
            <person name="Varghese N."/>
        </authorList>
    </citation>
    <scope>NUCLEOTIDE SEQUENCE [LARGE SCALE GENOMIC DNA]</scope>
    <source>
        <strain>LMG 25555</strain>
    </source>
</reference>
<reference key="2">
    <citation type="journal article" date="2015" name="Nat. Commun.">
        <title>A novel pathway producing dimethylsulphide in bacteria is widespread in soil environments.</title>
        <authorList>
            <person name="Carrion O."/>
            <person name="Curson A.R."/>
            <person name="Kumaresan D."/>
            <person name="Fu Y."/>
            <person name="Lang A.S."/>
            <person name="Mercade E."/>
            <person name="Todd J.D."/>
        </authorList>
    </citation>
    <scope>NUCLEOTIDE SEQUENCE [GENOMIC DNA] OF 66-399</scope>
    <scope>DISRUPTION PHENOTYPE</scope>
    <source>
        <strain>M1</strain>
    </source>
</reference>
<name>MEGL_PSEDM</name>
<keyword id="KW-0456">Lyase</keyword>
<keyword id="KW-0663">Pyridoxal phosphate</keyword>
<accession>A0A0J6G7P5</accession>
<accession>A0A0F6P9W0</accession>
<protein>
    <recommendedName>
        <fullName evidence="1">L-methionine gamma-lyase</fullName>
        <shortName evidence="1">MGL</shortName>
        <ecNumber evidence="1">4.4.1.11</ecNumber>
    </recommendedName>
</protein>
<dbReference type="EC" id="4.4.1.11" evidence="1"/>
<dbReference type="EMBL" id="FNUD01000002">
    <property type="protein sequence ID" value="SEE88007.1"/>
    <property type="molecule type" value="Genomic_DNA"/>
</dbReference>
<dbReference type="EMBL" id="KM030270">
    <property type="protein sequence ID" value="AJE75745.1"/>
    <property type="molecule type" value="Genomic_DNA"/>
</dbReference>
<dbReference type="RefSeq" id="WP_048358391.1">
    <property type="nucleotide sequence ID" value="NZ_FNUD01000002.1"/>
</dbReference>
<dbReference type="SMR" id="A0A0J6G7P5"/>
<dbReference type="PATRIC" id="fig|882211.3.peg.459"/>
<dbReference type="OrthoDB" id="9805807at2"/>
<dbReference type="BioCyc" id="MetaCyc:MONOMER-19897"/>
<dbReference type="Proteomes" id="UP000183613">
    <property type="component" value="Unassembled WGS sequence"/>
</dbReference>
<dbReference type="GO" id="GO:0005737">
    <property type="term" value="C:cytoplasm"/>
    <property type="evidence" value="ECO:0007669"/>
    <property type="project" value="TreeGrafter"/>
</dbReference>
<dbReference type="GO" id="GO:0018826">
    <property type="term" value="F:methionine gamma-lyase activity"/>
    <property type="evidence" value="ECO:0007669"/>
    <property type="project" value="UniProtKB-EC"/>
</dbReference>
<dbReference type="GO" id="GO:0030170">
    <property type="term" value="F:pyridoxal phosphate binding"/>
    <property type="evidence" value="ECO:0007669"/>
    <property type="project" value="InterPro"/>
</dbReference>
<dbReference type="GO" id="GO:0019346">
    <property type="term" value="P:transsulfuration"/>
    <property type="evidence" value="ECO:0007669"/>
    <property type="project" value="InterPro"/>
</dbReference>
<dbReference type="CDD" id="cd00614">
    <property type="entry name" value="CGS_like"/>
    <property type="match status" value="1"/>
</dbReference>
<dbReference type="FunFam" id="3.40.640.10:FF:000046">
    <property type="entry name" value="Cystathionine gamma-lyase"/>
    <property type="match status" value="1"/>
</dbReference>
<dbReference type="FunFam" id="3.90.1150.10:FF:000033">
    <property type="entry name" value="Cystathionine gamma-synthase"/>
    <property type="match status" value="1"/>
</dbReference>
<dbReference type="Gene3D" id="3.90.1150.10">
    <property type="entry name" value="Aspartate Aminotransferase, domain 1"/>
    <property type="match status" value="1"/>
</dbReference>
<dbReference type="Gene3D" id="3.40.640.10">
    <property type="entry name" value="Type I PLP-dependent aspartate aminotransferase-like (Major domain)"/>
    <property type="match status" value="1"/>
</dbReference>
<dbReference type="InterPro" id="IPR000277">
    <property type="entry name" value="Cys/Met-Metab_PyrdxlP-dep_enz"/>
</dbReference>
<dbReference type="InterPro" id="IPR054542">
    <property type="entry name" value="Cys_met_metab_PP"/>
</dbReference>
<dbReference type="InterPro" id="IPR006237">
    <property type="entry name" value="L-Met_gamma_lys"/>
</dbReference>
<dbReference type="InterPro" id="IPR015424">
    <property type="entry name" value="PyrdxlP-dep_Trfase"/>
</dbReference>
<dbReference type="InterPro" id="IPR015421">
    <property type="entry name" value="PyrdxlP-dep_Trfase_major"/>
</dbReference>
<dbReference type="InterPro" id="IPR015422">
    <property type="entry name" value="PyrdxlP-dep_Trfase_small"/>
</dbReference>
<dbReference type="NCBIfam" id="TIGR01328">
    <property type="entry name" value="met_gam_lyase"/>
    <property type="match status" value="1"/>
</dbReference>
<dbReference type="NCBIfam" id="NF005695">
    <property type="entry name" value="PRK07503.1"/>
    <property type="match status" value="1"/>
</dbReference>
<dbReference type="PANTHER" id="PTHR11808:SF80">
    <property type="entry name" value="CYSTATHIONINE GAMMA-LYASE"/>
    <property type="match status" value="1"/>
</dbReference>
<dbReference type="PANTHER" id="PTHR11808">
    <property type="entry name" value="TRANS-SULFURATION ENZYME FAMILY MEMBER"/>
    <property type="match status" value="1"/>
</dbReference>
<dbReference type="Pfam" id="PF01053">
    <property type="entry name" value="Cys_Met_Meta_PP"/>
    <property type="match status" value="1"/>
</dbReference>
<dbReference type="PIRSF" id="PIRSF001434">
    <property type="entry name" value="CGS"/>
    <property type="match status" value="1"/>
</dbReference>
<dbReference type="SUPFAM" id="SSF53383">
    <property type="entry name" value="PLP-dependent transferases"/>
    <property type="match status" value="1"/>
</dbReference>
<dbReference type="PROSITE" id="PS00868">
    <property type="entry name" value="CYS_MET_METAB_PP"/>
    <property type="match status" value="1"/>
</dbReference>
<comment type="function">
    <text evidence="1">Catalyzes the alpha,gamma-elimination of L-methionine to produce methanethiol, 2-oxobutanoate and ammonia.</text>
</comment>
<comment type="catalytic activity">
    <reaction evidence="1">
        <text>L-methionine + H2O = methanethiol + 2-oxobutanoate + NH4(+)</text>
        <dbReference type="Rhea" id="RHEA:23800"/>
        <dbReference type="ChEBI" id="CHEBI:15377"/>
        <dbReference type="ChEBI" id="CHEBI:16007"/>
        <dbReference type="ChEBI" id="CHEBI:16763"/>
        <dbReference type="ChEBI" id="CHEBI:28938"/>
        <dbReference type="ChEBI" id="CHEBI:57844"/>
        <dbReference type="EC" id="4.4.1.11"/>
    </reaction>
</comment>
<comment type="cofactor">
    <cofactor evidence="1">
        <name>pyridoxal 5'-phosphate</name>
        <dbReference type="ChEBI" id="CHEBI:597326"/>
    </cofactor>
</comment>
<comment type="subunit">
    <text evidence="1">Homotetramer; dimer of active dimers.</text>
</comment>
<comment type="disruption phenotype">
    <text evidence="2">Mutant cannot make methanethiol (MeSH) or dimethylsulfide (DMS) from either minimal medium or medium supplemented with methionine. However, it can make DMS when exogenous MeSH is added.</text>
</comment>
<comment type="similarity">
    <text evidence="4">Belongs to the trans-sulfuration enzymes family. L-methionine gamma-lyase subfamily.</text>
</comment>
<feature type="chain" id="PRO_0000446295" description="L-methionine gamma-lyase">
    <location>
        <begin position="1"/>
        <end position="399"/>
    </location>
</feature>
<feature type="binding site" evidence="1">
    <location>
        <begin position="59"/>
        <end position="61"/>
    </location>
    <ligand>
        <name>pyridoxal 5'-phosphate</name>
        <dbReference type="ChEBI" id="CHEBI:597326"/>
        <note>ligand shared between dimeric partners</note>
    </ligand>
</feature>
<feature type="binding site" description="in other chain" evidence="1">
    <location>
        <begin position="89"/>
        <end position="90"/>
    </location>
    <ligand>
        <name>pyridoxal 5'-phosphate</name>
        <dbReference type="ChEBI" id="CHEBI:597326"/>
        <note>ligand shared between dimeric partners</note>
    </ligand>
</feature>
<feature type="binding site" evidence="1">
    <location>
        <position position="114"/>
    </location>
    <ligand>
        <name>substrate</name>
    </ligand>
</feature>
<feature type="binding site" description="in other chain" evidence="1">
    <location>
        <begin position="209"/>
        <end position="211"/>
    </location>
    <ligand>
        <name>pyridoxal 5'-phosphate</name>
        <dbReference type="ChEBI" id="CHEBI:597326"/>
        <note>ligand shared between dimeric partners</note>
    </ligand>
</feature>
<feature type="binding site" evidence="1">
    <location>
        <position position="376"/>
    </location>
    <ligand>
        <name>substrate</name>
    </ligand>
</feature>
<feature type="modified residue" description="N6-(pyridoxal phosphate)lysine" evidence="1">
    <location>
        <position position="212"/>
    </location>
</feature>
<feature type="sequence conflict" description="In Ref. 2; AJE75745." evidence="4" ref="2">
    <original>AALENGEA</original>
    <variation>RREGTAS</variation>
    <location>
        <begin position="75"/>
        <end position="82"/>
    </location>
</feature>
<proteinExistence type="inferred from homology"/>
<sequence length="399" mass="43025">MNDKHKNFGFSTRAIHYGYNALENNGALIPPVYMTSTFAFPTVEYGAGCFAGEESGHFYTRISNPTLALLESRMAALENGEAGVAFSSGMGAIAATFWTLLRPGDEIIVNRTLYGCTFALLHHGIGEFGVVVKHVDMSNLAELEAAIGPATRMIYFETPANPNMQLVDIAAVSAIAHTHNDLIVVIDNTYCTPYLQRPLELGADVVVHSATKYLSGHSDITAGVVVTRQSLADRIRLQGLKDLTGAVLSPHDAHLLMRGIKTLALRMDRHCSSAQVIAQMLQDHPAVEWVAYPGLPSFPQYALASRQMKLPGGMIAFELKGGMAAGQRFMNALQLFSRAVSLGGAESLAQHPASMTHSTYTLEERAKHGISEGLVRLAVGLEDIADLLADIEQAMKAMA</sequence>